<dbReference type="EMBL" id="AE009950">
    <property type="protein sequence ID" value="AAL80503.1"/>
    <property type="molecule type" value="Genomic_DNA"/>
</dbReference>
<dbReference type="RefSeq" id="WP_011011493.1">
    <property type="nucleotide sequence ID" value="NZ_CP023154.1"/>
</dbReference>
<dbReference type="PDB" id="4V4N">
    <property type="method" value="EM"/>
    <property type="resolution" value="9.00 A"/>
    <property type="chains" value="f=1-51"/>
</dbReference>
<dbReference type="PDB" id="4V6U">
    <property type="method" value="EM"/>
    <property type="resolution" value="6.60 A"/>
    <property type="chains" value="Bf=1-51"/>
</dbReference>
<dbReference type="PDBsum" id="4V4N"/>
<dbReference type="PDBsum" id="4V6U"/>
<dbReference type="SMR" id="Q8U3S6"/>
<dbReference type="STRING" id="186497.PF0379"/>
<dbReference type="PaxDb" id="186497-PF0379"/>
<dbReference type="KEGG" id="pfu:PF0379"/>
<dbReference type="PATRIC" id="fig|186497.12.peg.394"/>
<dbReference type="eggNOG" id="arCOG04177">
    <property type="taxonomic scope" value="Archaea"/>
</dbReference>
<dbReference type="HOGENOM" id="CLU_181948_4_0_2"/>
<dbReference type="PhylomeDB" id="Q8U3S6"/>
<dbReference type="Proteomes" id="UP000001013">
    <property type="component" value="Chromosome"/>
</dbReference>
<dbReference type="GO" id="GO:1990904">
    <property type="term" value="C:ribonucleoprotein complex"/>
    <property type="evidence" value="ECO:0007669"/>
    <property type="project" value="UniProtKB-KW"/>
</dbReference>
<dbReference type="GO" id="GO:0005840">
    <property type="term" value="C:ribosome"/>
    <property type="evidence" value="ECO:0007669"/>
    <property type="project" value="UniProtKB-KW"/>
</dbReference>
<dbReference type="GO" id="GO:0003735">
    <property type="term" value="F:structural constituent of ribosome"/>
    <property type="evidence" value="ECO:0007669"/>
    <property type="project" value="InterPro"/>
</dbReference>
<dbReference type="GO" id="GO:0006412">
    <property type="term" value="P:translation"/>
    <property type="evidence" value="ECO:0007669"/>
    <property type="project" value="UniProtKB-UniRule"/>
</dbReference>
<dbReference type="FunFam" id="1.10.1620.10:FF:000001">
    <property type="entry name" value="60S ribosomal protein-like L39"/>
    <property type="match status" value="1"/>
</dbReference>
<dbReference type="Gene3D" id="1.10.1620.10">
    <property type="entry name" value="Ribosomal protein L39e"/>
    <property type="match status" value="1"/>
</dbReference>
<dbReference type="HAMAP" id="MF_00629">
    <property type="entry name" value="Ribosomal_eL39"/>
    <property type="match status" value="1"/>
</dbReference>
<dbReference type="InterPro" id="IPR000077">
    <property type="entry name" value="Ribosomal_eL39"/>
</dbReference>
<dbReference type="InterPro" id="IPR020083">
    <property type="entry name" value="Ribosomal_eL39_CS"/>
</dbReference>
<dbReference type="InterPro" id="IPR023626">
    <property type="entry name" value="Ribosomal_eL39_dom_sf"/>
</dbReference>
<dbReference type="NCBIfam" id="NF002316">
    <property type="entry name" value="PRK01242.1"/>
    <property type="match status" value="1"/>
</dbReference>
<dbReference type="Pfam" id="PF00832">
    <property type="entry name" value="Ribosomal_L39"/>
    <property type="match status" value="1"/>
</dbReference>
<dbReference type="SUPFAM" id="SSF48662">
    <property type="entry name" value="Ribosomal protein L39e"/>
    <property type="match status" value="1"/>
</dbReference>
<dbReference type="PROSITE" id="PS00051">
    <property type="entry name" value="RIBOSOMAL_L39E"/>
    <property type="match status" value="1"/>
</dbReference>
<gene>
    <name evidence="1" type="primary">rpl39e</name>
    <name type="ordered locus">PF0379</name>
</gene>
<protein>
    <recommendedName>
        <fullName evidence="1">Large ribosomal subunit protein eL39</fullName>
    </recommendedName>
    <alternativeName>
        <fullName>50S ribosomal protein L39e</fullName>
    </alternativeName>
</protein>
<keyword id="KW-0002">3D-structure</keyword>
<keyword id="KW-1185">Reference proteome</keyword>
<keyword id="KW-0687">Ribonucleoprotein</keyword>
<keyword id="KW-0689">Ribosomal protein</keyword>
<organism>
    <name type="scientific">Pyrococcus furiosus (strain ATCC 43587 / DSM 3638 / JCM 8422 / Vc1)</name>
    <dbReference type="NCBI Taxonomy" id="186497"/>
    <lineage>
        <taxon>Archaea</taxon>
        <taxon>Methanobacteriati</taxon>
        <taxon>Methanobacteriota</taxon>
        <taxon>Thermococci</taxon>
        <taxon>Thermococcales</taxon>
        <taxon>Thermococcaceae</taxon>
        <taxon>Pyrococcus</taxon>
    </lineage>
</organism>
<accession>Q8U3S6</accession>
<feature type="chain" id="PRO_0000127058" description="Large ribosomal subunit protein eL39">
    <location>
        <begin position="1"/>
        <end position="51"/>
    </location>
</feature>
<comment type="subunit">
    <text evidence="2">Part of the 50S ribosomal subunit.</text>
</comment>
<comment type="similarity">
    <text evidence="1">Belongs to the eukaryotic ribosomal protein eL39 family.</text>
</comment>
<reference key="1">
    <citation type="journal article" date="1999" name="Genetics">
        <title>Divergence of the hyperthermophilic archaea Pyrococcus furiosus and P. horikoshii inferred from complete genomic sequences.</title>
        <authorList>
            <person name="Maeder D.L."/>
            <person name="Weiss R.B."/>
            <person name="Dunn D.M."/>
            <person name="Cherry J.L."/>
            <person name="Gonzalez J.M."/>
            <person name="DiRuggiero J."/>
            <person name="Robb F.T."/>
        </authorList>
    </citation>
    <scope>NUCLEOTIDE SEQUENCE [LARGE SCALE GENOMIC DNA]</scope>
    <source>
        <strain>ATCC 43587 / DSM 3638 / JCM 8422 / Vc1</strain>
    </source>
</reference>
<reference evidence="3" key="2">
    <citation type="journal article" date="2013" name="Nucleic Acids Res.">
        <title>Promiscuous behaviour of archaeal ribosomal proteins: implications for eukaryotic ribosome evolution.</title>
        <authorList>
            <person name="Armache J.P."/>
            <person name="Anger A.M."/>
            <person name="Marquez V."/>
            <person name="Franckenberg S."/>
            <person name="Frohlich T."/>
            <person name="Villa E."/>
            <person name="Berninghausen O."/>
            <person name="Thomm M."/>
            <person name="Arnold G.J."/>
            <person name="Beckmann R."/>
            <person name="Wilson D.N."/>
        </authorList>
    </citation>
    <scope>STRUCTURE BY ELECTRON MICROSCOPY (6.60 ANGSTROMS) IN THE 70S RIBOSOME</scope>
    <scope>SUBUNIT</scope>
</reference>
<sequence>MARNKPLAKKLRLAKALKQNRRVPVWVIVKTNRRVLTHPKRRYWRRTKLKE</sequence>
<proteinExistence type="evidence at protein level"/>
<evidence type="ECO:0000255" key="1">
    <source>
        <dbReference type="HAMAP-Rule" id="MF_00629"/>
    </source>
</evidence>
<evidence type="ECO:0000269" key="2">
    <source>
    </source>
</evidence>
<evidence type="ECO:0007744" key="3">
    <source>
        <dbReference type="PDB" id="4V6U"/>
    </source>
</evidence>
<name>RL39_PYRFU</name>